<proteinExistence type="inferred from homology"/>
<organism>
    <name type="scientific">Bacillus cereus (strain 03BB102)</name>
    <dbReference type="NCBI Taxonomy" id="572264"/>
    <lineage>
        <taxon>Bacteria</taxon>
        <taxon>Bacillati</taxon>
        <taxon>Bacillota</taxon>
        <taxon>Bacilli</taxon>
        <taxon>Bacillales</taxon>
        <taxon>Bacillaceae</taxon>
        <taxon>Bacillus</taxon>
        <taxon>Bacillus cereus group</taxon>
    </lineage>
</organism>
<feature type="chain" id="PRO_1000197806" description="UPF0173 metal-dependent hydrolase BCA_4725">
    <location>
        <begin position="1"/>
        <end position="227"/>
    </location>
</feature>
<evidence type="ECO:0000255" key="1">
    <source>
        <dbReference type="HAMAP-Rule" id="MF_00457"/>
    </source>
</evidence>
<sequence>MKVSYHGHSVVKIETNGKVILIDPFLTGNSKTDLKAEDVKVDAILLSHGHGDHVGDTVELAKKNNAVVVAPFELATFLSWQGVNTHPMHIGGSHEFDFGKVKFTQAFHGSSYIDEENKTITYTGMPAGILFTAEEKTVYHAGDTALFSDMKLIGELNNIDVAFLPIGDNFTMGPEDAVLAAKWVQAKTVVPIHYNTFPVIEQDPYQFVEKLQNCTGKVLEAGESITL</sequence>
<dbReference type="EMBL" id="CP001407">
    <property type="protein sequence ID" value="ACO27059.1"/>
    <property type="molecule type" value="Genomic_DNA"/>
</dbReference>
<dbReference type="RefSeq" id="WP_000868952.1">
    <property type="nucleotide sequence ID" value="NZ_CP009318.1"/>
</dbReference>
<dbReference type="SMR" id="C1EUV8"/>
<dbReference type="KEGG" id="bcx:BCA_4725"/>
<dbReference type="PATRIC" id="fig|572264.18.peg.4673"/>
<dbReference type="Proteomes" id="UP000002210">
    <property type="component" value="Chromosome"/>
</dbReference>
<dbReference type="GO" id="GO:0016787">
    <property type="term" value="F:hydrolase activity"/>
    <property type="evidence" value="ECO:0007669"/>
    <property type="project" value="UniProtKB-UniRule"/>
</dbReference>
<dbReference type="Gene3D" id="3.60.15.10">
    <property type="entry name" value="Ribonuclease Z/Hydroxyacylglutathione hydrolase-like"/>
    <property type="match status" value="1"/>
</dbReference>
<dbReference type="HAMAP" id="MF_00457">
    <property type="entry name" value="UPF0173"/>
    <property type="match status" value="1"/>
</dbReference>
<dbReference type="InterPro" id="IPR001279">
    <property type="entry name" value="Metallo-B-lactamas"/>
</dbReference>
<dbReference type="InterPro" id="IPR036866">
    <property type="entry name" value="RibonucZ/Hydroxyglut_hydro"/>
</dbReference>
<dbReference type="InterPro" id="IPR022877">
    <property type="entry name" value="UPF0173"/>
</dbReference>
<dbReference type="InterPro" id="IPR050114">
    <property type="entry name" value="UPF0173_UPF0282_UlaG_hydrolase"/>
</dbReference>
<dbReference type="NCBIfam" id="NF001911">
    <property type="entry name" value="PRK00685.1"/>
    <property type="match status" value="1"/>
</dbReference>
<dbReference type="PANTHER" id="PTHR43546:SF3">
    <property type="entry name" value="UPF0173 METAL-DEPENDENT HYDROLASE MJ1163"/>
    <property type="match status" value="1"/>
</dbReference>
<dbReference type="PANTHER" id="PTHR43546">
    <property type="entry name" value="UPF0173 METAL-DEPENDENT HYDROLASE MJ1163-RELATED"/>
    <property type="match status" value="1"/>
</dbReference>
<dbReference type="Pfam" id="PF12706">
    <property type="entry name" value="Lactamase_B_2"/>
    <property type="match status" value="1"/>
</dbReference>
<dbReference type="SMART" id="SM00849">
    <property type="entry name" value="Lactamase_B"/>
    <property type="match status" value="1"/>
</dbReference>
<dbReference type="SUPFAM" id="SSF56281">
    <property type="entry name" value="Metallo-hydrolase/oxidoreductase"/>
    <property type="match status" value="1"/>
</dbReference>
<reference key="1">
    <citation type="submission" date="2009-02" db="EMBL/GenBank/DDBJ databases">
        <title>Genome sequence of Bacillus cereus 03BB102.</title>
        <authorList>
            <person name="Dodson R.J."/>
            <person name="Jackson P."/>
            <person name="Munk A.C."/>
            <person name="Brettin T."/>
            <person name="Bruce D."/>
            <person name="Detter C."/>
            <person name="Tapia R."/>
            <person name="Han C."/>
            <person name="Sutton G."/>
            <person name="Sims D."/>
        </authorList>
    </citation>
    <scope>NUCLEOTIDE SEQUENCE [LARGE SCALE GENOMIC DNA]</scope>
    <source>
        <strain>03BB102</strain>
    </source>
</reference>
<gene>
    <name type="ordered locus">BCA_4725</name>
</gene>
<keyword id="KW-0378">Hydrolase</keyword>
<protein>
    <recommendedName>
        <fullName evidence="1">UPF0173 metal-dependent hydrolase BCA_4725</fullName>
    </recommendedName>
</protein>
<name>Y4725_BACC3</name>
<accession>C1EUV8</accession>
<comment type="similarity">
    <text evidence="1">Belongs to the UPF0173 family.</text>
</comment>